<feature type="chain" id="PRO_0000062336" description="Ribulose bisphosphate carboxylase large chain">
    <location>
        <begin position="1" status="less than"/>
        <end position="455" status="greater than"/>
    </location>
</feature>
<feature type="active site" description="Proton acceptor" evidence="1">
    <location>
        <position position="166"/>
    </location>
</feature>
<feature type="active site" description="Proton acceptor" evidence="1">
    <location>
        <position position="285"/>
    </location>
</feature>
<feature type="binding site" description="in homodimeric partner" evidence="1">
    <location>
        <position position="114"/>
    </location>
    <ligand>
        <name>substrate</name>
    </ligand>
</feature>
<feature type="binding site" evidence="1">
    <location>
        <position position="164"/>
    </location>
    <ligand>
        <name>substrate</name>
    </ligand>
</feature>
<feature type="binding site" evidence="1">
    <location>
        <position position="168"/>
    </location>
    <ligand>
        <name>substrate</name>
    </ligand>
</feature>
<feature type="binding site" description="via carbamate group" evidence="1">
    <location>
        <position position="192"/>
    </location>
    <ligand>
        <name>Mg(2+)</name>
        <dbReference type="ChEBI" id="CHEBI:18420"/>
    </ligand>
</feature>
<feature type="binding site" evidence="1">
    <location>
        <position position="194"/>
    </location>
    <ligand>
        <name>Mg(2+)</name>
        <dbReference type="ChEBI" id="CHEBI:18420"/>
    </ligand>
</feature>
<feature type="binding site" evidence="1">
    <location>
        <position position="195"/>
    </location>
    <ligand>
        <name>Mg(2+)</name>
        <dbReference type="ChEBI" id="CHEBI:18420"/>
    </ligand>
</feature>
<feature type="binding site" evidence="1">
    <location>
        <position position="286"/>
    </location>
    <ligand>
        <name>substrate</name>
    </ligand>
</feature>
<feature type="binding site" evidence="1">
    <location>
        <position position="318"/>
    </location>
    <ligand>
        <name>substrate</name>
    </ligand>
</feature>
<feature type="binding site" evidence="1">
    <location>
        <position position="370"/>
    </location>
    <ligand>
        <name>substrate</name>
    </ligand>
</feature>
<feature type="site" description="Transition state stabilizer" evidence="1">
    <location>
        <position position="325"/>
    </location>
</feature>
<feature type="modified residue" description="N6,N6,N6-trimethyllysine" evidence="1">
    <location>
        <position position="5"/>
    </location>
</feature>
<feature type="modified residue" description="N6-carboxylysine" evidence="1">
    <location>
        <position position="192"/>
    </location>
</feature>
<feature type="disulfide bond" description="Interchain; in linked form" evidence="1">
    <location>
        <position position="238"/>
    </location>
</feature>
<feature type="non-terminal residue">
    <location>
        <position position="1"/>
    </location>
</feature>
<feature type="non-terminal residue">
    <location>
        <position position="455"/>
    </location>
</feature>
<proteinExistence type="inferred from homology"/>
<sequence length="455" mass="50378">SVGFKAGVKDYKLTYYTPDYETKDTDILAAFRVTPQPGVPPEEAGAAVAAESSTGTWTTVWTDGLTSLDRYKGRCYHIEPVAGEENQFIAYVAYPLDLFEEGSVTNMFTSIVGNVFGFKALRALRLEDLRIPTAYTKTFQGPPHGIQVERDKLNKYGRPLLGCTIKPKLGLSAKNYGRAVYECLRGGLDFTKDDENVNSQPFMRWRDRFLFCAEALFKAQAETGEIKGHYLNATAGTCEEMMKRAMCARELGVPIVMHDYLTGGFTANTTLAHYCRDNGLLLHIHRAMHAVIDRQKNHGMHFRVLAKALRLSGGDHIHAGTVVGKLEGEREITLGFVDLLRDDYVEKDRSRGIYFTQDWVSLPGVIPVASGGIHVWHMPALTEIFGDDSVLQFGGGTLGHPWGNAPGAVANRVALEACVQARNEGRDLAREGNEIIREASKWSPELAAACEVWKE</sequence>
<keyword id="KW-0113">Calvin cycle</keyword>
<keyword id="KW-0120">Carbon dioxide fixation</keyword>
<keyword id="KW-0150">Chloroplast</keyword>
<keyword id="KW-1015">Disulfide bond</keyword>
<keyword id="KW-0456">Lyase</keyword>
<keyword id="KW-0460">Magnesium</keyword>
<keyword id="KW-0479">Metal-binding</keyword>
<keyword id="KW-0488">Methylation</keyword>
<keyword id="KW-0503">Monooxygenase</keyword>
<keyword id="KW-0560">Oxidoreductase</keyword>
<keyword id="KW-0601">Photorespiration</keyword>
<keyword id="KW-0602">Photosynthesis</keyword>
<keyword id="KW-0934">Plastid</keyword>
<accession>P93998</accession>
<reference key="1">
    <citation type="thesis" date="1995" institute="Universitaet Heidelberg" country="Germany">
        <authorList>
            <person name="Kaess E."/>
        </authorList>
    </citation>
    <scope>NUCLEOTIDE SEQUENCE [GENOMIC DNA]</scope>
    <source>
        <tissue>Leaf</tissue>
    </source>
</reference>
<dbReference type="EC" id="4.1.1.39" evidence="1"/>
<dbReference type="EMBL" id="Z70146">
    <property type="protein sequence ID" value="CAA94004.1"/>
    <property type="molecule type" value="Genomic_DNA"/>
</dbReference>
<dbReference type="SMR" id="P93998"/>
<dbReference type="GO" id="GO:0009507">
    <property type="term" value="C:chloroplast"/>
    <property type="evidence" value="ECO:0007669"/>
    <property type="project" value="UniProtKB-SubCell"/>
</dbReference>
<dbReference type="GO" id="GO:0000287">
    <property type="term" value="F:magnesium ion binding"/>
    <property type="evidence" value="ECO:0007669"/>
    <property type="project" value="InterPro"/>
</dbReference>
<dbReference type="GO" id="GO:0004497">
    <property type="term" value="F:monooxygenase activity"/>
    <property type="evidence" value="ECO:0007669"/>
    <property type="project" value="UniProtKB-KW"/>
</dbReference>
<dbReference type="GO" id="GO:0016984">
    <property type="term" value="F:ribulose-bisphosphate carboxylase activity"/>
    <property type="evidence" value="ECO:0007669"/>
    <property type="project" value="UniProtKB-EC"/>
</dbReference>
<dbReference type="GO" id="GO:0009853">
    <property type="term" value="P:photorespiration"/>
    <property type="evidence" value="ECO:0007669"/>
    <property type="project" value="UniProtKB-KW"/>
</dbReference>
<dbReference type="GO" id="GO:0019253">
    <property type="term" value="P:reductive pentose-phosphate cycle"/>
    <property type="evidence" value="ECO:0007669"/>
    <property type="project" value="UniProtKB-KW"/>
</dbReference>
<dbReference type="CDD" id="cd08212">
    <property type="entry name" value="RuBisCO_large_I"/>
    <property type="match status" value="1"/>
</dbReference>
<dbReference type="FunFam" id="3.20.20.110:FF:000001">
    <property type="entry name" value="Ribulose bisphosphate carboxylase large chain"/>
    <property type="match status" value="1"/>
</dbReference>
<dbReference type="FunFam" id="3.30.70.150:FF:000001">
    <property type="entry name" value="Ribulose bisphosphate carboxylase large chain"/>
    <property type="match status" value="1"/>
</dbReference>
<dbReference type="Gene3D" id="3.20.20.110">
    <property type="entry name" value="Ribulose bisphosphate carboxylase, large subunit, C-terminal domain"/>
    <property type="match status" value="1"/>
</dbReference>
<dbReference type="Gene3D" id="3.30.70.150">
    <property type="entry name" value="RuBisCO large subunit, N-terminal domain"/>
    <property type="match status" value="1"/>
</dbReference>
<dbReference type="HAMAP" id="MF_01338">
    <property type="entry name" value="RuBisCO_L_type1"/>
    <property type="match status" value="1"/>
</dbReference>
<dbReference type="InterPro" id="IPR033966">
    <property type="entry name" value="RuBisCO"/>
</dbReference>
<dbReference type="InterPro" id="IPR020878">
    <property type="entry name" value="RuBisCo_large_chain_AS"/>
</dbReference>
<dbReference type="InterPro" id="IPR000685">
    <property type="entry name" value="RuBisCO_lsu_C"/>
</dbReference>
<dbReference type="InterPro" id="IPR036376">
    <property type="entry name" value="RuBisCO_lsu_C_sf"/>
</dbReference>
<dbReference type="InterPro" id="IPR017443">
    <property type="entry name" value="RuBisCO_lsu_fd_N"/>
</dbReference>
<dbReference type="InterPro" id="IPR036422">
    <property type="entry name" value="RuBisCO_lsu_N_sf"/>
</dbReference>
<dbReference type="InterPro" id="IPR020888">
    <property type="entry name" value="RuBisCO_lsuI"/>
</dbReference>
<dbReference type="NCBIfam" id="NF003252">
    <property type="entry name" value="PRK04208.1"/>
    <property type="match status" value="1"/>
</dbReference>
<dbReference type="PANTHER" id="PTHR42704">
    <property type="entry name" value="RIBULOSE BISPHOSPHATE CARBOXYLASE"/>
    <property type="match status" value="1"/>
</dbReference>
<dbReference type="PANTHER" id="PTHR42704:SF15">
    <property type="entry name" value="RIBULOSE BISPHOSPHATE CARBOXYLASE LARGE CHAIN"/>
    <property type="match status" value="1"/>
</dbReference>
<dbReference type="Pfam" id="PF00016">
    <property type="entry name" value="RuBisCO_large"/>
    <property type="match status" value="1"/>
</dbReference>
<dbReference type="Pfam" id="PF02788">
    <property type="entry name" value="RuBisCO_large_N"/>
    <property type="match status" value="1"/>
</dbReference>
<dbReference type="SFLD" id="SFLDG01052">
    <property type="entry name" value="RuBisCO"/>
    <property type="match status" value="1"/>
</dbReference>
<dbReference type="SFLD" id="SFLDS00014">
    <property type="entry name" value="RuBisCO"/>
    <property type="match status" value="1"/>
</dbReference>
<dbReference type="SFLD" id="SFLDG00301">
    <property type="entry name" value="RuBisCO-like_proteins"/>
    <property type="match status" value="1"/>
</dbReference>
<dbReference type="SUPFAM" id="SSF51649">
    <property type="entry name" value="RuBisCo, C-terminal domain"/>
    <property type="match status" value="1"/>
</dbReference>
<dbReference type="SUPFAM" id="SSF54966">
    <property type="entry name" value="RuBisCO, large subunit, small (N-terminal) domain"/>
    <property type="match status" value="1"/>
</dbReference>
<dbReference type="PROSITE" id="PS00157">
    <property type="entry name" value="RUBISCO_LARGE"/>
    <property type="match status" value="1"/>
</dbReference>
<name>RBL_VACFA</name>
<protein>
    <recommendedName>
        <fullName evidence="1">Ribulose bisphosphate carboxylase large chain</fullName>
        <shortName evidence="1">RuBisCO large subunit</shortName>
        <ecNumber evidence="1">4.1.1.39</ecNumber>
    </recommendedName>
</protein>
<organism>
    <name type="scientific">Vachellia farnesiana</name>
    <name type="common">Sweet acacia</name>
    <name type="synonym">Acacia farnesiana</name>
    <dbReference type="NCBI Taxonomy" id="72368"/>
    <lineage>
        <taxon>Eukaryota</taxon>
        <taxon>Viridiplantae</taxon>
        <taxon>Streptophyta</taxon>
        <taxon>Embryophyta</taxon>
        <taxon>Tracheophyta</taxon>
        <taxon>Spermatophyta</taxon>
        <taxon>Magnoliopsida</taxon>
        <taxon>eudicotyledons</taxon>
        <taxon>Gunneridae</taxon>
        <taxon>Pentapetalae</taxon>
        <taxon>rosids</taxon>
        <taxon>fabids</taxon>
        <taxon>Fabales</taxon>
        <taxon>Fabaceae</taxon>
        <taxon>Caesalpinioideae</taxon>
        <taxon>mimosoid clade</taxon>
        <taxon>Acacieae</taxon>
        <taxon>Vachellia</taxon>
    </lineage>
</organism>
<evidence type="ECO:0000255" key="1">
    <source>
        <dbReference type="HAMAP-Rule" id="MF_01338"/>
    </source>
</evidence>
<geneLocation type="chloroplast"/>
<comment type="function">
    <text evidence="1">RuBisCO catalyzes two reactions: the carboxylation of D-ribulose 1,5-bisphosphate, the primary event in carbon dioxide fixation, as well as the oxidative fragmentation of the pentose substrate in the photorespiration process. Both reactions occur simultaneously and in competition at the same active site.</text>
</comment>
<comment type="catalytic activity">
    <reaction evidence="1">
        <text>2 (2R)-3-phosphoglycerate + 2 H(+) = D-ribulose 1,5-bisphosphate + CO2 + H2O</text>
        <dbReference type="Rhea" id="RHEA:23124"/>
        <dbReference type="ChEBI" id="CHEBI:15377"/>
        <dbReference type="ChEBI" id="CHEBI:15378"/>
        <dbReference type="ChEBI" id="CHEBI:16526"/>
        <dbReference type="ChEBI" id="CHEBI:57870"/>
        <dbReference type="ChEBI" id="CHEBI:58272"/>
        <dbReference type="EC" id="4.1.1.39"/>
    </reaction>
</comment>
<comment type="catalytic activity">
    <reaction evidence="1">
        <text>D-ribulose 1,5-bisphosphate + O2 = 2-phosphoglycolate + (2R)-3-phosphoglycerate + 2 H(+)</text>
        <dbReference type="Rhea" id="RHEA:36631"/>
        <dbReference type="ChEBI" id="CHEBI:15378"/>
        <dbReference type="ChEBI" id="CHEBI:15379"/>
        <dbReference type="ChEBI" id="CHEBI:57870"/>
        <dbReference type="ChEBI" id="CHEBI:58033"/>
        <dbReference type="ChEBI" id="CHEBI:58272"/>
    </reaction>
</comment>
<comment type="cofactor">
    <cofactor evidence="1">
        <name>Mg(2+)</name>
        <dbReference type="ChEBI" id="CHEBI:18420"/>
    </cofactor>
    <text evidence="1">Binds 1 Mg(2+) ion per subunit.</text>
</comment>
<comment type="subunit">
    <text evidence="1">Heterohexadecamer of 8 large chains and 8 small chains; disulfide-linked. The disulfide link is formed within the large subunit homodimers.</text>
</comment>
<comment type="subcellular location">
    <subcellularLocation>
        <location>Plastid</location>
        <location>Chloroplast</location>
    </subcellularLocation>
</comment>
<comment type="PTM">
    <text evidence="1">The disulfide bond which can form in the large chain dimeric partners within the hexadecamer appears to be associated with oxidative stress and protein turnover.</text>
</comment>
<comment type="miscellaneous">
    <text evidence="1">The basic functional RuBisCO is composed of a large chain homodimer in a 'head-to-tail' conformation. In form I RuBisCO this homodimer is arranged in a barrel-like tetramer with the small subunits forming a tetrameric 'cap' on each end of the 'barrel'.</text>
</comment>
<comment type="similarity">
    <text evidence="1">Belongs to the RuBisCO large chain family. Type I subfamily.</text>
</comment>
<gene>
    <name evidence="1" type="primary">rbcL</name>
</gene>